<accession>A2S464</accession>
<protein>
    <recommendedName>
        <fullName evidence="1">Small ribosomal subunit protein uS15</fullName>
    </recommendedName>
    <alternativeName>
        <fullName evidence="2">30S ribosomal protein S15</fullName>
    </alternativeName>
</protein>
<sequence length="89" mass="10098">MSVADIKKSEVVAQFARGANDTGSPEVQVALLTARITELTGHFKTHAKDHHSRRGLLRMVSRRRKLLDYLKGKDADRYRALIEKLGLRK</sequence>
<feature type="chain" id="PRO_1000054761" description="Small ribosomal subunit protein uS15">
    <location>
        <begin position="1"/>
        <end position="89"/>
    </location>
</feature>
<comment type="function">
    <text evidence="1">One of the primary rRNA binding proteins, it binds directly to 16S rRNA where it helps nucleate assembly of the platform of the 30S subunit by binding and bridging several RNA helices of the 16S rRNA.</text>
</comment>
<comment type="function">
    <text evidence="1">Forms an intersubunit bridge (bridge B4) with the 23S rRNA of the 50S subunit in the ribosome.</text>
</comment>
<comment type="subunit">
    <text evidence="1">Part of the 30S ribosomal subunit. Forms a bridge to the 50S subunit in the 70S ribosome, contacting the 23S rRNA.</text>
</comment>
<comment type="similarity">
    <text evidence="1">Belongs to the universal ribosomal protein uS15 family.</text>
</comment>
<organism>
    <name type="scientific">Burkholderia mallei (strain NCTC 10229)</name>
    <dbReference type="NCBI Taxonomy" id="412022"/>
    <lineage>
        <taxon>Bacteria</taxon>
        <taxon>Pseudomonadati</taxon>
        <taxon>Pseudomonadota</taxon>
        <taxon>Betaproteobacteria</taxon>
        <taxon>Burkholderiales</taxon>
        <taxon>Burkholderiaceae</taxon>
        <taxon>Burkholderia</taxon>
        <taxon>pseudomallei group</taxon>
    </lineage>
</organism>
<proteinExistence type="inferred from homology"/>
<name>RS15_BURM9</name>
<evidence type="ECO:0000255" key="1">
    <source>
        <dbReference type="HAMAP-Rule" id="MF_01343"/>
    </source>
</evidence>
<evidence type="ECO:0000305" key="2"/>
<keyword id="KW-0687">Ribonucleoprotein</keyword>
<keyword id="KW-0689">Ribosomal protein</keyword>
<keyword id="KW-0694">RNA-binding</keyword>
<keyword id="KW-0699">rRNA-binding</keyword>
<dbReference type="EMBL" id="CP000546">
    <property type="protein sequence ID" value="ABN03645.1"/>
    <property type="molecule type" value="Genomic_DNA"/>
</dbReference>
<dbReference type="RefSeq" id="WP_004185828.1">
    <property type="nucleotide sequence ID" value="NC_008836.1"/>
</dbReference>
<dbReference type="SMR" id="A2S464"/>
<dbReference type="GeneID" id="93059688"/>
<dbReference type="KEGG" id="bml:BMA10229_A0743"/>
<dbReference type="HOGENOM" id="CLU_148518_0_0_4"/>
<dbReference type="Proteomes" id="UP000002283">
    <property type="component" value="Chromosome I"/>
</dbReference>
<dbReference type="GO" id="GO:0022627">
    <property type="term" value="C:cytosolic small ribosomal subunit"/>
    <property type="evidence" value="ECO:0007669"/>
    <property type="project" value="TreeGrafter"/>
</dbReference>
<dbReference type="GO" id="GO:0019843">
    <property type="term" value="F:rRNA binding"/>
    <property type="evidence" value="ECO:0007669"/>
    <property type="project" value="UniProtKB-UniRule"/>
</dbReference>
<dbReference type="GO" id="GO:0003735">
    <property type="term" value="F:structural constituent of ribosome"/>
    <property type="evidence" value="ECO:0007669"/>
    <property type="project" value="InterPro"/>
</dbReference>
<dbReference type="GO" id="GO:0006412">
    <property type="term" value="P:translation"/>
    <property type="evidence" value="ECO:0007669"/>
    <property type="project" value="UniProtKB-UniRule"/>
</dbReference>
<dbReference type="CDD" id="cd00353">
    <property type="entry name" value="Ribosomal_S15p_S13e"/>
    <property type="match status" value="1"/>
</dbReference>
<dbReference type="FunFam" id="1.10.287.10:FF:000002">
    <property type="entry name" value="30S ribosomal protein S15"/>
    <property type="match status" value="1"/>
</dbReference>
<dbReference type="Gene3D" id="6.10.250.3130">
    <property type="match status" value="1"/>
</dbReference>
<dbReference type="Gene3D" id="1.10.287.10">
    <property type="entry name" value="S15/NS1, RNA-binding"/>
    <property type="match status" value="1"/>
</dbReference>
<dbReference type="HAMAP" id="MF_01343_B">
    <property type="entry name" value="Ribosomal_uS15_B"/>
    <property type="match status" value="1"/>
</dbReference>
<dbReference type="InterPro" id="IPR000589">
    <property type="entry name" value="Ribosomal_uS15"/>
</dbReference>
<dbReference type="InterPro" id="IPR005290">
    <property type="entry name" value="Ribosomal_uS15_bac-type"/>
</dbReference>
<dbReference type="InterPro" id="IPR009068">
    <property type="entry name" value="uS15_NS1_RNA-bd_sf"/>
</dbReference>
<dbReference type="NCBIfam" id="TIGR00952">
    <property type="entry name" value="S15_bact"/>
    <property type="match status" value="1"/>
</dbReference>
<dbReference type="PANTHER" id="PTHR23321">
    <property type="entry name" value="RIBOSOMAL PROTEIN S15, BACTERIAL AND ORGANELLAR"/>
    <property type="match status" value="1"/>
</dbReference>
<dbReference type="PANTHER" id="PTHR23321:SF26">
    <property type="entry name" value="SMALL RIBOSOMAL SUBUNIT PROTEIN US15M"/>
    <property type="match status" value="1"/>
</dbReference>
<dbReference type="Pfam" id="PF00312">
    <property type="entry name" value="Ribosomal_S15"/>
    <property type="match status" value="1"/>
</dbReference>
<dbReference type="SMART" id="SM01387">
    <property type="entry name" value="Ribosomal_S15"/>
    <property type="match status" value="1"/>
</dbReference>
<dbReference type="SUPFAM" id="SSF47060">
    <property type="entry name" value="S15/NS1 RNA-binding domain"/>
    <property type="match status" value="1"/>
</dbReference>
<dbReference type="PROSITE" id="PS00362">
    <property type="entry name" value="RIBOSOMAL_S15"/>
    <property type="match status" value="1"/>
</dbReference>
<reference key="1">
    <citation type="journal article" date="2010" name="Genome Biol. Evol.">
        <title>Continuing evolution of Burkholderia mallei through genome reduction and large-scale rearrangements.</title>
        <authorList>
            <person name="Losada L."/>
            <person name="Ronning C.M."/>
            <person name="DeShazer D."/>
            <person name="Woods D."/>
            <person name="Fedorova N."/>
            <person name="Kim H.S."/>
            <person name="Shabalina S.A."/>
            <person name="Pearson T.R."/>
            <person name="Brinkac L."/>
            <person name="Tan P."/>
            <person name="Nandi T."/>
            <person name="Crabtree J."/>
            <person name="Badger J."/>
            <person name="Beckstrom-Sternberg S."/>
            <person name="Saqib M."/>
            <person name="Schutzer S.E."/>
            <person name="Keim P."/>
            <person name="Nierman W.C."/>
        </authorList>
    </citation>
    <scope>NUCLEOTIDE SEQUENCE [LARGE SCALE GENOMIC DNA]</scope>
    <source>
        <strain>NCTC 10229</strain>
    </source>
</reference>
<gene>
    <name evidence="1" type="primary">rpsO</name>
    <name type="ordered locus">BMA10229_A0743</name>
</gene>